<name>CA1B_CONPU</name>
<reference key="1">
    <citation type="journal article" date="2007" name="Toxicon">
        <title>A novel alpha conotoxin (alpha-PIB) isolated from C. purpurascens is selective for skeletal muscle nicotinic acetylcholine receptors.</title>
        <authorList>
            <person name="Lopez-Vera E."/>
            <person name="Jacobsen R.B."/>
            <person name="Ellison M."/>
            <person name="Olivera B.M."/>
            <person name="Teichert R.W."/>
        </authorList>
    </citation>
    <scope>PROTEIN SEQUENCE</scope>
    <scope>FUNCTION</scope>
    <scope>SUBCELLULAR LOCATION</scope>
    <scope>TISSUE SPECIFICITY</scope>
    <scope>MASS SPECTROMETRY</scope>
    <scope>AMIDATION AT CYS-16</scope>
    <scope>PYROGLUTAMATE FORMATION AT GLN-1</scope>
    <scope>HYDROXYLATION AT PRO-3</scope>
    <scope>SYNTHESIS</scope>
    <source>
        <tissue>Venom</tissue>
    </source>
</reference>
<sequence length="16" mass="1766">QSPGCCWNPACVKNRC</sequence>
<evidence type="ECO:0000250" key="1">
    <source>
        <dbReference type="UniProtKB" id="P69657"/>
    </source>
</evidence>
<evidence type="ECO:0000269" key="2">
    <source>
    </source>
</evidence>
<evidence type="ECO:0000305" key="3"/>
<comment type="function">
    <text evidence="2">Alpha-conotoxins act on postsynaptic membranes, they bind to the nicotinic acetylcholine receptors (nAChR) and thus inhibit them. This toxin causes paralysis upon intramuscular injection into goldfish and blocks both fetal (alpha-1/beta-1/delta-gamma subunits) and adult (alpha-1/beta-1/delta-epsilon subunits) subtypes of vertebrate muscle nAChRs in a dose-dependent manner.</text>
</comment>
<comment type="subcellular location">
    <subcellularLocation>
        <location evidence="2">Secreted</location>
    </subcellularLocation>
</comment>
<comment type="tissue specificity">
    <text evidence="2">Expressed by the venom duct.</text>
</comment>
<comment type="domain">
    <text>The cysteine framework is I (CC-C-C). Alpha4/4 pattern.</text>
</comment>
<comment type="mass spectrometry" mass="1760.73" method="MALDI" evidence="2"/>
<comment type="similarity">
    <text evidence="3">Belongs to the conotoxin A superfamily.</text>
</comment>
<proteinExistence type="evidence at protein level"/>
<dbReference type="ConoServer" id="38">
    <property type="toxin name" value="PIB"/>
</dbReference>
<dbReference type="GO" id="GO:0005576">
    <property type="term" value="C:extracellular region"/>
    <property type="evidence" value="ECO:0007669"/>
    <property type="project" value="UniProtKB-SubCell"/>
</dbReference>
<dbReference type="GO" id="GO:0035792">
    <property type="term" value="C:host cell postsynaptic membrane"/>
    <property type="evidence" value="ECO:0007669"/>
    <property type="project" value="UniProtKB-KW"/>
</dbReference>
<dbReference type="GO" id="GO:0030550">
    <property type="term" value="F:acetylcholine receptor inhibitor activity"/>
    <property type="evidence" value="ECO:0007669"/>
    <property type="project" value="UniProtKB-KW"/>
</dbReference>
<dbReference type="GO" id="GO:0099106">
    <property type="term" value="F:ion channel regulator activity"/>
    <property type="evidence" value="ECO:0007669"/>
    <property type="project" value="UniProtKB-KW"/>
</dbReference>
<dbReference type="GO" id="GO:0090729">
    <property type="term" value="F:toxin activity"/>
    <property type="evidence" value="ECO:0007669"/>
    <property type="project" value="UniProtKB-KW"/>
</dbReference>
<organism>
    <name type="scientific">Conus purpurascens</name>
    <name type="common">Purple cone</name>
    <dbReference type="NCBI Taxonomy" id="41690"/>
    <lineage>
        <taxon>Eukaryota</taxon>
        <taxon>Metazoa</taxon>
        <taxon>Spiralia</taxon>
        <taxon>Lophotrochozoa</taxon>
        <taxon>Mollusca</taxon>
        <taxon>Gastropoda</taxon>
        <taxon>Caenogastropoda</taxon>
        <taxon>Neogastropoda</taxon>
        <taxon>Conoidea</taxon>
        <taxon>Conidae</taxon>
        <taxon>Conus</taxon>
        <taxon>Chelyconus</taxon>
    </lineage>
</organism>
<keyword id="KW-0008">Acetylcholine receptor inhibiting toxin</keyword>
<keyword id="KW-0027">Amidation</keyword>
<keyword id="KW-0903">Direct protein sequencing</keyword>
<keyword id="KW-1015">Disulfide bond</keyword>
<keyword id="KW-0379">Hydroxylation</keyword>
<keyword id="KW-0872">Ion channel impairing toxin</keyword>
<keyword id="KW-0528">Neurotoxin</keyword>
<keyword id="KW-0629">Postsynaptic neurotoxin</keyword>
<keyword id="KW-0873">Pyrrolidone carboxylic acid</keyword>
<keyword id="KW-0964">Secreted</keyword>
<keyword id="KW-0800">Toxin</keyword>
<accession>P0C351</accession>
<feature type="peptide" id="PRO_0000288946" description="Alpha-conotoxin PIB">
    <location>
        <begin position="1"/>
        <end position="16"/>
    </location>
</feature>
<feature type="modified residue" description="Pyrrolidone carboxylic acid" evidence="2">
    <location>
        <position position="1"/>
    </location>
</feature>
<feature type="modified residue" description="4-hydroxyproline" evidence="2">
    <location>
        <position position="3"/>
    </location>
</feature>
<feature type="modified residue" description="Cysteine amide" evidence="2">
    <location>
        <position position="16"/>
    </location>
</feature>
<feature type="disulfide bond" evidence="1">
    <location>
        <begin position="5"/>
        <end position="11"/>
    </location>
</feature>
<feature type="disulfide bond" evidence="1">
    <location>
        <begin position="6"/>
        <end position="16"/>
    </location>
</feature>
<protein>
    <recommendedName>
        <fullName>Alpha-conotoxin PIB</fullName>
    </recommendedName>
</protein>